<reference key="1">
    <citation type="journal article" date="2015" name="PLoS Genet.">
        <title>The dynamic genome and transcriptome of the human fungal pathogen Blastomyces and close relative Emmonsia.</title>
        <authorList>
            <person name="Munoz J.F."/>
            <person name="Gauthier G.M."/>
            <person name="Desjardins C.A."/>
            <person name="Gallo J.E."/>
            <person name="Holder J."/>
            <person name="Sullivan T.D."/>
            <person name="Marty A.J."/>
            <person name="Carmen J.C."/>
            <person name="Chen Z."/>
            <person name="Ding L."/>
            <person name="Gujja S."/>
            <person name="Magrini V."/>
            <person name="Misas E."/>
            <person name="Mitreva M."/>
            <person name="Priest M."/>
            <person name="Saif S."/>
            <person name="Whiston E.A."/>
            <person name="Young S."/>
            <person name="Zeng Q."/>
            <person name="Goldman W.E."/>
            <person name="Mardis E.R."/>
            <person name="Taylor J.W."/>
            <person name="McEwen J.G."/>
            <person name="Clay O.K."/>
            <person name="Klein B.S."/>
            <person name="Cuomo C.A."/>
        </authorList>
    </citation>
    <scope>NUCLEOTIDE SEQUENCE [LARGE SCALE GENOMIC DNA]</scope>
    <source>
        <strain>ER-3 / ATCC MYA-2586</strain>
    </source>
</reference>
<keyword id="KW-0031">Aminopeptidase</keyword>
<keyword id="KW-0378">Hydrolase</keyword>
<keyword id="KW-0464">Manganese</keyword>
<keyword id="KW-0479">Metal-binding</keyword>
<keyword id="KW-0482">Metalloprotease</keyword>
<keyword id="KW-0645">Protease</keyword>
<evidence type="ECO:0000250" key="1"/>
<evidence type="ECO:0000305" key="2"/>
<sequence>MDASVDKILAGKYPAKHHAKRVAARIRELGHGEAGVIYLESQKTRMIEDNDGEMPFRQRRNFFYLSGCPLPDSYLTYNIEEDHLTLFIPPIDEDSVIWSGLPLSPDEALELYDVDAVLSTADVNASLAHYCSAKEGTKVFAISDQVSPHITFLPFQETDFDVLKRAAEEARVVKDDYEIALLRRANEISSKAHVAVIKAAKSAMNERELEATFIATCMSYGCREQSYHPIFAGGTNGATLHYQKNDQDLVDKTTGEKKLNMLVDAGGEYRNYCADITRVFPLSGKFSAESRQIYDIVLEMQMTSLAMIKAGVMWEDVHSNSHRVAIRGLLKLGILRGTEQELFDKGISVAFFPHGLGHYLGMDTHDTGGNPNYEDKDSKFKYLRLRGVLACGGVVTVEPGLYFCRFIIDPYLASPELGKYIDANVLEKYWSVGGVRLEDNVVVTQNGYDNLTTAPKIPEEIEKLAAGP</sequence>
<proteinExistence type="inferred from homology"/>
<comment type="function">
    <text evidence="1">Catalyzes the removal of a penultimate prolyl residue from the N-termini of peptides.</text>
</comment>
<comment type="catalytic activity">
    <reaction>
        <text>Release of any N-terminal amino acid, including proline, that is linked to proline, even from a dipeptide or tripeptide.</text>
        <dbReference type="EC" id="3.4.11.9"/>
    </reaction>
</comment>
<comment type="cofactor">
    <cofactor evidence="1">
        <name>Mn(2+)</name>
        <dbReference type="ChEBI" id="CHEBI:29035"/>
    </cofactor>
    <text evidence="1">Binds 2 manganese ions per subunit.</text>
</comment>
<comment type="similarity">
    <text evidence="2">Belongs to the peptidase M24B family.</text>
</comment>
<accession>C5G874</accession>
<protein>
    <recommendedName>
        <fullName>Probable Xaa-Pro aminopeptidase PEPP</fullName>
        <ecNumber>3.4.11.9</ecNumber>
    </recommendedName>
    <alternativeName>
        <fullName>Aminoacylproline aminopeptidase</fullName>
    </alternativeName>
    <alternativeName>
        <fullName>Prolidase</fullName>
    </alternativeName>
</protein>
<dbReference type="EC" id="3.4.11.9"/>
<dbReference type="EMBL" id="EQ999973">
    <property type="protein sequence ID" value="EEQ83502.1"/>
    <property type="molecule type" value="Genomic_DNA"/>
</dbReference>
<dbReference type="SMR" id="C5G874"/>
<dbReference type="STRING" id="559297.C5G874"/>
<dbReference type="VEuPathDB" id="FungiDB:BDCG_00307"/>
<dbReference type="eggNOG" id="KOG2737">
    <property type="taxonomic scope" value="Eukaryota"/>
</dbReference>
<dbReference type="HOGENOM" id="CLU_017266_1_2_1"/>
<dbReference type="OMA" id="DAHALFF"/>
<dbReference type="GO" id="GO:0030145">
    <property type="term" value="F:manganese ion binding"/>
    <property type="evidence" value="ECO:0007669"/>
    <property type="project" value="InterPro"/>
</dbReference>
<dbReference type="GO" id="GO:0070006">
    <property type="term" value="F:metalloaminopeptidase activity"/>
    <property type="evidence" value="ECO:0007669"/>
    <property type="project" value="InterPro"/>
</dbReference>
<dbReference type="GO" id="GO:0006508">
    <property type="term" value="P:proteolysis"/>
    <property type="evidence" value="ECO:0007669"/>
    <property type="project" value="UniProtKB-KW"/>
</dbReference>
<dbReference type="CDD" id="cd01087">
    <property type="entry name" value="Prolidase"/>
    <property type="match status" value="1"/>
</dbReference>
<dbReference type="FunFam" id="3.90.230.10:FF:000002">
    <property type="entry name" value="Xaa-Pro aminopeptidase 3"/>
    <property type="match status" value="1"/>
</dbReference>
<dbReference type="Gene3D" id="3.90.230.10">
    <property type="entry name" value="Creatinase/methionine aminopeptidase superfamily"/>
    <property type="match status" value="1"/>
</dbReference>
<dbReference type="Gene3D" id="3.40.350.10">
    <property type="entry name" value="Creatinase/prolidase N-terminal domain"/>
    <property type="match status" value="1"/>
</dbReference>
<dbReference type="InterPro" id="IPR007865">
    <property type="entry name" value="Aminopep_P_N"/>
</dbReference>
<dbReference type="InterPro" id="IPR029149">
    <property type="entry name" value="Creatin/AminoP/Spt16_N"/>
</dbReference>
<dbReference type="InterPro" id="IPR036005">
    <property type="entry name" value="Creatinase/aminopeptidase-like"/>
</dbReference>
<dbReference type="InterPro" id="IPR000994">
    <property type="entry name" value="Pept_M24"/>
</dbReference>
<dbReference type="InterPro" id="IPR052433">
    <property type="entry name" value="X-Pro_dipept-like"/>
</dbReference>
<dbReference type="PANTHER" id="PTHR43226">
    <property type="entry name" value="XAA-PRO AMINOPEPTIDASE 3"/>
    <property type="match status" value="1"/>
</dbReference>
<dbReference type="PANTHER" id="PTHR43226:SF1">
    <property type="entry name" value="XAA-PRO DIPEPTIDASE"/>
    <property type="match status" value="1"/>
</dbReference>
<dbReference type="Pfam" id="PF05195">
    <property type="entry name" value="AMP_N"/>
    <property type="match status" value="1"/>
</dbReference>
<dbReference type="Pfam" id="PF00557">
    <property type="entry name" value="Peptidase_M24"/>
    <property type="match status" value="1"/>
</dbReference>
<dbReference type="SMART" id="SM01011">
    <property type="entry name" value="AMP_N"/>
    <property type="match status" value="1"/>
</dbReference>
<dbReference type="SUPFAM" id="SSF55920">
    <property type="entry name" value="Creatinase/aminopeptidase"/>
    <property type="match status" value="1"/>
</dbReference>
<dbReference type="SUPFAM" id="SSF53092">
    <property type="entry name" value="Creatinase/prolidase N-terminal domain"/>
    <property type="match status" value="1"/>
</dbReference>
<feature type="chain" id="PRO_0000411860" description="Probable Xaa-Pro aminopeptidase PEPP">
    <location>
        <begin position="1"/>
        <end position="468"/>
    </location>
</feature>
<feature type="binding site" evidence="1">
    <location>
        <position position="264"/>
    </location>
    <ligand>
        <name>Mn(2+)</name>
        <dbReference type="ChEBI" id="CHEBI:29035"/>
        <label>2</label>
    </ligand>
</feature>
<feature type="binding site" evidence="1">
    <location>
        <position position="275"/>
    </location>
    <ligand>
        <name>Mn(2+)</name>
        <dbReference type="ChEBI" id="CHEBI:29035"/>
        <label>1</label>
    </ligand>
</feature>
<feature type="binding site" evidence="1">
    <location>
        <position position="275"/>
    </location>
    <ligand>
        <name>Mn(2+)</name>
        <dbReference type="ChEBI" id="CHEBI:29035"/>
        <label>2</label>
    </ligand>
</feature>
<feature type="binding site" evidence="1">
    <location>
        <position position="398"/>
    </location>
    <ligand>
        <name>Mn(2+)</name>
        <dbReference type="ChEBI" id="CHEBI:29035"/>
        <label>1</label>
    </ligand>
</feature>
<feature type="binding site" evidence="1">
    <location>
        <position position="438"/>
    </location>
    <ligand>
        <name>Mn(2+)</name>
        <dbReference type="ChEBI" id="CHEBI:29035"/>
        <label>1</label>
    </ligand>
</feature>
<feature type="binding site" evidence="1">
    <location>
        <position position="438"/>
    </location>
    <ligand>
        <name>Mn(2+)</name>
        <dbReference type="ChEBI" id="CHEBI:29035"/>
        <label>2</label>
    </ligand>
</feature>
<name>AMPP3_AJEDR</name>
<gene>
    <name type="primary">PEPP</name>
    <name type="ORF">BDCG_00307</name>
</gene>
<organism>
    <name type="scientific">Ajellomyces dermatitidis (strain ER-3 / ATCC MYA-2586)</name>
    <name type="common">Blastomyces dermatitidis</name>
    <dbReference type="NCBI Taxonomy" id="559297"/>
    <lineage>
        <taxon>Eukaryota</taxon>
        <taxon>Fungi</taxon>
        <taxon>Dikarya</taxon>
        <taxon>Ascomycota</taxon>
        <taxon>Pezizomycotina</taxon>
        <taxon>Eurotiomycetes</taxon>
        <taxon>Eurotiomycetidae</taxon>
        <taxon>Onygenales</taxon>
        <taxon>Ajellomycetaceae</taxon>
        <taxon>Blastomyces</taxon>
    </lineage>
</organism>